<comment type="function">
    <text evidence="2 10">May act as a modulatory subunit rather than a functional channel. Unlike other P2XRs members, P2RX6 does not seem to form functional homotrimers (PubMed:22378790). P2RX6 requires the presence of P2RX4 or P2RX2 to shuttle it to the plasma membrane where it may form functional heterotrimeric receptors at the plasma membrane (PubMed:22378790). P2RX6 can be translocated to the nucleus and functions as a nuclear regulator of post-transcriptional modifications in neurons (By similarity).</text>
</comment>
<comment type="catalytic activity">
    <reaction evidence="15">
        <text>Ca(2+)(in) = Ca(2+)(out)</text>
        <dbReference type="Rhea" id="RHEA:29671"/>
        <dbReference type="ChEBI" id="CHEBI:29108"/>
    </reaction>
</comment>
<comment type="subunit">
    <text evidence="2 4 9 10">Monomer (By similarity). Unlike, all of the other P2RX subunits, P2RX6 does not seem to form functional homotrimers (PubMed:15657042, PubMed:22378790). Forms heterotrimer with P2RX2; with characteristics clearly different from those of P2RX2 homomeric receptors (PubMed:22378790). Forms heterotrimer with P2RX4; functional differences between homomeric P2RX4 and P2RX4/6 heterotrimer are minor (By similarity). Forms a P2RX2/P2RX4/P2RX6 heterotrimer (By similarity). Interacts with SF3A1; resulting in a reduction of the splicing activity (By similarity).</text>
</comment>
<comment type="subcellular location">
    <subcellularLocation>
        <location evidence="4">Cell membrane</location>
        <topology evidence="5">Multi-pass membrane protein</topology>
    </subcellularLocation>
    <subcellularLocation>
        <location evidence="4">Endoplasmic reticulum</location>
    </subcellularLocation>
    <subcellularLocation>
        <location evidence="2">Nucleus</location>
    </subcellularLocation>
    <subcellularLocation>
        <location evidence="2">Nucleus inner membrane</location>
        <topology evidence="5">Multi-pass membrane protein</topology>
    </subcellularLocation>
    <text evidence="2 4">Heteromerization of P2RX6 subunits with either P2RX2 or P2RX4 subunits guides the P2RX6 subunit to the plasma membrane (By similarity). Monomers remain anchored to the endoplasmic reticulum (ER) membrane by the hydrophobic N-terminal end (By similarity). Mainly expressed in the cell body of the hippocampal neurons (By similarity).</text>
</comment>
<comment type="alternative products">
    <event type="alternative splicing"/>
    <isoform>
        <id>O15547-1</id>
        <name>1</name>
        <sequence type="displayed"/>
    </isoform>
    <isoform>
        <id>O15547-2</id>
        <name>2</name>
        <sequence type="described" ref="VSP_044799"/>
    </isoform>
</comment>
<comment type="tissue specificity">
    <text>Expressed predominantly in skeletal muscle.</text>
</comment>
<comment type="domain">
    <text evidence="4">An uncharged region within the N terminus of the P2RX6 subunit inhibits its assembly and exit from the endoplasmic reticulum.</text>
</comment>
<comment type="domain">
    <text evidence="3">The P2RX6 subunit lacks nine residues in the left flipper, a flexible loop structure, which is a key element in the activation of P2RXs.</text>
</comment>
<comment type="PTM">
    <text evidence="4 9">N-glycosylated (PubMed:15657042). N-linked glycosylation can affect trafficking to the membrane and function (By similarity).</text>
</comment>
<comment type="similarity">
    <text evidence="14">Belongs to the P2X receptor family.</text>
</comment>
<comment type="sequence caution" evidence="14">
    <conflict type="erroneous initiation">
        <sequence resource="EMBL-CDS" id="AAF13303"/>
    </conflict>
    <text>Truncated N-terminus.</text>
</comment>
<comment type="sequence caution" evidence="14">
    <conflict type="miscellaneous discrepancy">
        <sequence resource="EMBL-CDS" id="AAF13303"/>
    </conflict>
    <text>Contaminating sequence. Sequence of unknown origin in the N-terminal part.</text>
</comment>
<comment type="sequence caution" evidence="14">
    <conflict type="erroneous initiation">
        <sequence resource="EMBL-CDS" id="AAH33488"/>
    </conflict>
    <text>Truncated N-terminus.</text>
</comment>
<comment type="sequence caution" evidence="14">
    <conflict type="erroneous initiation">
        <sequence resource="EMBL-CDS" id="AAI09210"/>
    </conflict>
    <text>Truncated N-terminus.</text>
</comment>
<comment type="sequence caution" evidence="14">
    <conflict type="erroneous initiation">
        <sequence resource="EMBL-CDS" id="BAA22046"/>
    </conflict>
    <text>Truncated N-terminus.</text>
</comment>
<comment type="sequence caution" evidence="14">
    <conflict type="erroneous initiation">
        <sequence resource="EMBL-CDS" id="BAA22047"/>
    </conflict>
    <text>Truncated N-terminus.</text>
</comment>
<comment type="online information" name="Wikipedia">
    <link uri="https://en.wikipedia.org/wiki/P2X_receptor"/>
    <text>P2X receptor entry</text>
</comment>
<evidence type="ECO:0000250" key="1">
    <source>
        <dbReference type="UniProtKB" id="F8W463"/>
    </source>
</evidence>
<evidence type="ECO:0000250" key="2">
    <source>
        <dbReference type="UniProtKB" id="O54803"/>
    </source>
</evidence>
<evidence type="ECO:0000250" key="3">
    <source>
        <dbReference type="UniProtKB" id="P51577"/>
    </source>
</evidence>
<evidence type="ECO:0000250" key="4">
    <source>
        <dbReference type="UniProtKB" id="P51579"/>
    </source>
</evidence>
<evidence type="ECO:0000255" key="5"/>
<evidence type="ECO:0000256" key="6">
    <source>
        <dbReference type="SAM" id="MobiDB-lite"/>
    </source>
</evidence>
<evidence type="ECO:0000269" key="7">
    <source>
    </source>
</evidence>
<evidence type="ECO:0000269" key="8">
    <source>
    </source>
</evidence>
<evidence type="ECO:0000269" key="9">
    <source>
    </source>
</evidence>
<evidence type="ECO:0000269" key="10">
    <source>
    </source>
</evidence>
<evidence type="ECO:0000303" key="11">
    <source>
    </source>
</evidence>
<evidence type="ECO:0000303" key="12">
    <source>
    </source>
</evidence>
<evidence type="ECO:0000303" key="13">
    <source ref="5"/>
</evidence>
<evidence type="ECO:0000305" key="14"/>
<evidence type="ECO:0000305" key="15">
    <source>
    </source>
</evidence>
<accession>O15547</accession>
<accession>F6V3D7</accession>
<accession>Q32MB6</accession>
<accession>Q58F04</accession>
<accession>Q6IC33</accession>
<accession>Q9UL50</accession>
<proteinExistence type="evidence at protein level"/>
<reference key="1">
    <citation type="journal article" date="1997" name="Cancer Res.">
        <title>Cloning of P2XM, a novel human P2X receptor gene regulated by p53.</title>
        <authorList>
            <person name="Urano T."/>
            <person name="Nishimori H."/>
            <person name="Han H."/>
            <person name="Furuhata T."/>
            <person name="Kimura Y."/>
            <person name="Nakamura Y."/>
            <person name="Tokino T."/>
        </authorList>
    </citation>
    <scope>NUCLEOTIDE SEQUENCE [GENOMIC DNA / MRNA] (ISOFORM 1)</scope>
</reference>
<reference key="2">
    <citation type="journal article" date="2004" name="Genome Biol.">
        <title>A genome annotation-driven approach to cloning the human ORFeome.</title>
        <authorList>
            <person name="Collins J.E."/>
            <person name="Wright C.L."/>
            <person name="Edwards C.A."/>
            <person name="Davis M.P."/>
            <person name="Grinham J.A."/>
            <person name="Cole C.G."/>
            <person name="Goward M.E."/>
            <person name="Aguado B."/>
            <person name="Mallya M."/>
            <person name="Mokrab Y."/>
            <person name="Huckle E.J."/>
            <person name="Beare D.M."/>
            <person name="Dunham I."/>
        </authorList>
    </citation>
    <scope>NUCLEOTIDE SEQUENCE [LARGE SCALE MRNA] (ISOFORM 1)</scope>
</reference>
<reference key="3">
    <citation type="journal article" date="1999" name="Nature">
        <title>The DNA sequence of human chromosome 22.</title>
        <authorList>
            <person name="Dunham I."/>
            <person name="Hunt A.R."/>
            <person name="Collins J.E."/>
            <person name="Bruskiewich R."/>
            <person name="Beare D.M."/>
            <person name="Clamp M."/>
            <person name="Smink L.J."/>
            <person name="Ainscough R."/>
            <person name="Almeida J.P."/>
            <person name="Babbage A.K."/>
            <person name="Bagguley C."/>
            <person name="Bailey J."/>
            <person name="Barlow K.F."/>
            <person name="Bates K.N."/>
            <person name="Beasley O.P."/>
            <person name="Bird C.P."/>
            <person name="Blakey S.E."/>
            <person name="Bridgeman A.M."/>
            <person name="Buck D."/>
            <person name="Burgess J."/>
            <person name="Burrill W.D."/>
            <person name="Burton J."/>
            <person name="Carder C."/>
            <person name="Carter N.P."/>
            <person name="Chen Y."/>
            <person name="Clark G."/>
            <person name="Clegg S.M."/>
            <person name="Cobley V.E."/>
            <person name="Cole C.G."/>
            <person name="Collier R.E."/>
            <person name="Connor R."/>
            <person name="Conroy D."/>
            <person name="Corby N.R."/>
            <person name="Coville G.J."/>
            <person name="Cox A.V."/>
            <person name="Davis J."/>
            <person name="Dawson E."/>
            <person name="Dhami P.D."/>
            <person name="Dockree C."/>
            <person name="Dodsworth S.J."/>
            <person name="Durbin R.M."/>
            <person name="Ellington A.G."/>
            <person name="Evans K.L."/>
            <person name="Fey J.M."/>
            <person name="Fleming K."/>
            <person name="French L."/>
            <person name="Garner A.A."/>
            <person name="Gilbert J.G.R."/>
            <person name="Goward M.E."/>
            <person name="Grafham D.V."/>
            <person name="Griffiths M.N.D."/>
            <person name="Hall C."/>
            <person name="Hall R.E."/>
            <person name="Hall-Tamlyn G."/>
            <person name="Heathcott R.W."/>
            <person name="Ho S."/>
            <person name="Holmes S."/>
            <person name="Hunt S.E."/>
            <person name="Jones M.C."/>
            <person name="Kershaw J."/>
            <person name="Kimberley A.M."/>
            <person name="King A."/>
            <person name="Laird G.K."/>
            <person name="Langford C.F."/>
            <person name="Leversha M.A."/>
            <person name="Lloyd C."/>
            <person name="Lloyd D.M."/>
            <person name="Martyn I.D."/>
            <person name="Mashreghi-Mohammadi M."/>
            <person name="Matthews L.H."/>
            <person name="Mccann O.T."/>
            <person name="Mcclay J."/>
            <person name="Mclaren S."/>
            <person name="McMurray A.A."/>
            <person name="Milne S.A."/>
            <person name="Mortimore B.J."/>
            <person name="Odell C.N."/>
            <person name="Pavitt R."/>
            <person name="Pearce A.V."/>
            <person name="Pearson D."/>
            <person name="Phillimore B.J.C.T."/>
            <person name="Phillips S.H."/>
            <person name="Plumb R.W."/>
            <person name="Ramsay H."/>
            <person name="Ramsey Y."/>
            <person name="Rogers L."/>
            <person name="Ross M.T."/>
            <person name="Scott C.E."/>
            <person name="Sehra H.K."/>
            <person name="Skuce C.D."/>
            <person name="Smalley S."/>
            <person name="Smith M.L."/>
            <person name="Soderlund C."/>
            <person name="Spragon L."/>
            <person name="Steward C.A."/>
            <person name="Sulston J.E."/>
            <person name="Swann R.M."/>
            <person name="Vaudin M."/>
            <person name="Wall M."/>
            <person name="Wallis J.M."/>
            <person name="Whiteley M.N."/>
            <person name="Willey D.L."/>
            <person name="Williams L."/>
            <person name="Williams S.A."/>
            <person name="Williamson H."/>
            <person name="Wilmer T.E."/>
            <person name="Wilming L."/>
            <person name="Wright C.L."/>
            <person name="Hubbard T."/>
            <person name="Bentley D.R."/>
            <person name="Beck S."/>
            <person name="Rogers J."/>
            <person name="Shimizu N."/>
            <person name="Minoshima S."/>
            <person name="Kawasaki K."/>
            <person name="Sasaki T."/>
            <person name="Asakawa S."/>
            <person name="Kudoh J."/>
            <person name="Shintani A."/>
            <person name="Shibuya K."/>
            <person name="Yoshizaki Y."/>
            <person name="Aoki N."/>
            <person name="Mitsuyama S."/>
            <person name="Roe B.A."/>
            <person name="Chen F."/>
            <person name="Chu L."/>
            <person name="Crabtree J."/>
            <person name="Deschamps S."/>
            <person name="Do A."/>
            <person name="Do T."/>
            <person name="Dorman A."/>
            <person name="Fang F."/>
            <person name="Fu Y."/>
            <person name="Hu P."/>
            <person name="Hua A."/>
            <person name="Kenton S."/>
            <person name="Lai H."/>
            <person name="Lao H.I."/>
            <person name="Lewis J."/>
            <person name="Lewis S."/>
            <person name="Lin S.-P."/>
            <person name="Loh P."/>
            <person name="Malaj E."/>
            <person name="Nguyen T."/>
            <person name="Pan H."/>
            <person name="Phan S."/>
            <person name="Qi S."/>
            <person name="Qian Y."/>
            <person name="Ray L."/>
            <person name="Ren Q."/>
            <person name="Shaull S."/>
            <person name="Sloan D."/>
            <person name="Song L."/>
            <person name="Wang Q."/>
            <person name="Wang Y."/>
            <person name="Wang Z."/>
            <person name="White J."/>
            <person name="Willingham D."/>
            <person name="Wu H."/>
            <person name="Yao Z."/>
            <person name="Zhan M."/>
            <person name="Zhang G."/>
            <person name="Chissoe S."/>
            <person name="Murray J."/>
            <person name="Miller N."/>
            <person name="Minx P."/>
            <person name="Fulton R."/>
            <person name="Johnson D."/>
            <person name="Bemis G."/>
            <person name="Bentley D."/>
            <person name="Bradshaw H."/>
            <person name="Bourne S."/>
            <person name="Cordes M."/>
            <person name="Du Z."/>
            <person name="Fulton L."/>
            <person name="Goela D."/>
            <person name="Graves T."/>
            <person name="Hawkins J."/>
            <person name="Hinds K."/>
            <person name="Kemp K."/>
            <person name="Latreille P."/>
            <person name="Layman D."/>
            <person name="Ozersky P."/>
            <person name="Rohlfing T."/>
            <person name="Scheet P."/>
            <person name="Walker C."/>
            <person name="Wamsley A."/>
            <person name="Wohldmann P."/>
            <person name="Pepin K."/>
            <person name="Nelson J."/>
            <person name="Korf I."/>
            <person name="Bedell J.A."/>
            <person name="Hillier L.W."/>
            <person name="Mardis E."/>
            <person name="Waterston R."/>
            <person name="Wilson R."/>
            <person name="Emanuel B.S."/>
            <person name="Shaikh T."/>
            <person name="Kurahashi H."/>
            <person name="Saitta S."/>
            <person name="Budarf M.L."/>
            <person name="McDermid H.E."/>
            <person name="Johnson A."/>
            <person name="Wong A.C.C."/>
            <person name="Morrow B.E."/>
            <person name="Edelmann L."/>
            <person name="Kim U.J."/>
            <person name="Shizuya H."/>
            <person name="Simon M.I."/>
            <person name="Dumanski J.P."/>
            <person name="Peyrard M."/>
            <person name="Kedra D."/>
            <person name="Seroussi E."/>
            <person name="Fransson I."/>
            <person name="Tapia I."/>
            <person name="Bruder C.E."/>
            <person name="O'Brien K.P."/>
            <person name="Wilkinson P."/>
            <person name="Bodenteich A."/>
            <person name="Hartman K."/>
            <person name="Hu X."/>
            <person name="Khan A.S."/>
            <person name="Lane L."/>
            <person name="Tilahun Y."/>
            <person name="Wright H."/>
        </authorList>
    </citation>
    <scope>NUCLEOTIDE SEQUENCE [LARGE SCALE GENOMIC DNA]</scope>
</reference>
<reference key="4">
    <citation type="journal article" date="2004" name="Genome Res.">
        <title>The status, quality, and expansion of the NIH full-length cDNA project: the Mammalian Gene Collection (MGC).</title>
        <authorList>
            <consortium name="The MGC Project Team"/>
        </authorList>
    </citation>
    <scope>NUCLEOTIDE SEQUENCE [LARGE SCALE MRNA] (ISOFORM 2)</scope>
    <scope>NUCLEOTIDE SEQUENCE [LARGE SCALE MRNA] OF 6-441 (ISOFORM 1)</scope>
    <scope>VARIANT HIS-242</scope>
    <source>
        <tissue>Brain</tissue>
    </source>
</reference>
<reference key="5">
    <citation type="submission" date="1998-05" db="EMBL/GenBank/DDBJ databases">
        <title>Cloning and tissue distribution of a human cDNA encoding P2X6 purinoceptor.</title>
        <authorList>
            <person name="Cheng X."/>
            <person name="Jin H."/>
            <person name="Huang C.-C."/>
        </authorList>
    </citation>
    <scope>NUCLEOTIDE SEQUENCE [MRNA] OF 5-441 (ISOFORM 1)</scope>
    <source>
        <tissue>Skeletal muscle</tissue>
    </source>
</reference>
<reference key="6">
    <citation type="journal article" date="2002" name="Proteomics">
        <title>Identification of the phosphotyrosine proteome from thrombin activated platelets.</title>
        <authorList>
            <person name="Maguire P.B."/>
            <person name="Wynne K.J."/>
            <person name="Harney D.F."/>
            <person name="O'Donoghue N.M."/>
            <person name="Stephens G."/>
            <person name="Fitzgerald D.J."/>
        </authorList>
    </citation>
    <scope>PHOSPHORYLATION AT TYR-64</scope>
</reference>
<reference key="7">
    <citation type="journal article" date="2005" name="J. Biol. Chem.">
        <title>Atomic force microscopy imaging demonstrates that P2X2 receptors are trimers but that P2X6 receptor subunits do not oligomerize.</title>
        <authorList>
            <person name="Barrera N.P."/>
            <person name="Ormond S.J."/>
            <person name="Henderson R.M."/>
            <person name="Murrell-Lagnado R.D."/>
            <person name="Edwardson J.M."/>
        </authorList>
    </citation>
    <scope>SUBUNIT</scope>
    <scope>GLYCOSYLATION</scope>
</reference>
<reference key="8">
    <citation type="journal article" date="2012" name="J. Biol. Chem.">
        <title>ATP binding site mutagenesis reveals different subunit stoichiometry of functional P2X2/3 and P2X2/6 receptors.</title>
        <authorList>
            <person name="Hausmann R."/>
            <person name="Bodnar M."/>
            <person name="Woltersdorf R."/>
            <person name="Wang H."/>
            <person name="Fuchs M."/>
            <person name="Messemer N."/>
            <person name="Qin Y."/>
            <person name="Guenther J."/>
            <person name="Riedel T."/>
            <person name="Grohmann M."/>
            <person name="Nieber K."/>
            <person name="Schmalzing G."/>
            <person name="Rubini P."/>
            <person name="Illes P."/>
        </authorList>
    </citation>
    <scope>FUNCTION</scope>
    <scope>SUBUNIT</scope>
    <scope>INTERACTION WITH P2RX2</scope>
</reference>
<sequence>MCPQLAGAGSMGSPGATTGWGLLDYKTEKYVMTRNWRVGALQRLLQFGIVVYVVGWALLAKKGYQERDLEPQFSIITKLKGVSVTQIKELGNRLWDVADFVKPPQGENVFFLVTNFLVTPAQVQGRCPEHPSVPLANCWVDEDCPEGEGGTHSHGVKTGQCVVFNGTHRTCEIWSWCPVESGVVPSRPLLAQAQNFTLFIKNTVTFSKFNFSKSNALETWDPTYFKHCRYEPQFSPYCPVFRIGDLVAKAGGTFEDLALLGGSVGIRVHWDCDLDTGDSGCWPHYSFQLQEKSYNFRTATHWWEQPGVEARTLLKLYGIRFDILVTGQAGKFGLIPTAVTLGTGAAWLGVVTFFCDLLLLYVDREAHFYWRTKYEEAKAPKATANSVWRELALASQARLAECLRRSSAPAPTATAAGSQTQTPGWPCPSSDTHLPTHSGSL</sequence>
<protein>
    <recommendedName>
        <fullName>P2X purinoceptor 6</fullName>
        <shortName evidence="13">P2X6</shortName>
    </recommendedName>
    <alternativeName>
        <fullName>ATP receptor</fullName>
    </alternativeName>
    <alternativeName>
        <fullName evidence="12">P2XM</fullName>
    </alternativeName>
    <alternativeName>
        <fullName>Purinergic receptor</fullName>
    </alternativeName>
    <alternativeName>
        <fullName>Purinergic receptor P2X-like 1</fullName>
    </alternativeName>
</protein>
<name>P2RX6_HUMAN</name>
<organism>
    <name type="scientific">Homo sapiens</name>
    <name type="common">Human</name>
    <dbReference type="NCBI Taxonomy" id="9606"/>
    <lineage>
        <taxon>Eukaryota</taxon>
        <taxon>Metazoa</taxon>
        <taxon>Chordata</taxon>
        <taxon>Craniata</taxon>
        <taxon>Vertebrata</taxon>
        <taxon>Euteleostomi</taxon>
        <taxon>Mammalia</taxon>
        <taxon>Eutheria</taxon>
        <taxon>Euarchontoglires</taxon>
        <taxon>Primates</taxon>
        <taxon>Haplorrhini</taxon>
        <taxon>Catarrhini</taxon>
        <taxon>Hominidae</taxon>
        <taxon>Homo</taxon>
    </lineage>
</organism>
<feature type="chain" id="PRO_0000161557" description="P2X purinoceptor 6">
    <location>
        <begin position="1"/>
        <end position="441"/>
    </location>
</feature>
<feature type="topological domain" description="Cytoplasmic" evidence="5">
    <location>
        <begin position="11"/>
        <end position="39"/>
    </location>
</feature>
<feature type="transmembrane region" description="Helical; Name=1" evidence="5">
    <location>
        <begin position="40"/>
        <end position="60"/>
    </location>
</feature>
<feature type="topological domain" description="Extracellular" evidence="5">
    <location>
        <begin position="61"/>
        <end position="333"/>
    </location>
</feature>
<feature type="transmembrane region" description="Helical; Name=2" evidence="5">
    <location>
        <begin position="334"/>
        <end position="354"/>
    </location>
</feature>
<feature type="topological domain" description="Cytoplasmic" evidence="5">
    <location>
        <begin position="355"/>
        <end position="441"/>
    </location>
</feature>
<feature type="region of interest" description="Disordered" evidence="6">
    <location>
        <begin position="410"/>
        <end position="441"/>
    </location>
</feature>
<feature type="compositionally biased region" description="Low complexity" evidence="6">
    <location>
        <begin position="410"/>
        <end position="424"/>
    </location>
</feature>
<feature type="compositionally biased region" description="Polar residues" evidence="6">
    <location>
        <begin position="429"/>
        <end position="441"/>
    </location>
</feature>
<feature type="modified residue" description="Phosphotyrosine" evidence="7">
    <location>
        <position position="64"/>
    </location>
</feature>
<feature type="glycosylation site" description="N-linked (GlcNAc...) asparagine" evidence="5">
    <location>
        <position position="165"/>
    </location>
</feature>
<feature type="glycosylation site" description="N-linked (GlcNAc...) asparagine" evidence="5">
    <location>
        <position position="195"/>
    </location>
</feature>
<feature type="glycosylation site" description="N-linked (GlcNAc...) asparagine" evidence="5">
    <location>
        <position position="210"/>
    </location>
</feature>
<feature type="disulfide bond" evidence="1">
    <location>
        <begin position="127"/>
        <end position="177"/>
    </location>
</feature>
<feature type="disulfide bond" evidence="1">
    <location>
        <begin position="138"/>
        <end position="161"/>
    </location>
</feature>
<feature type="disulfide bond" evidence="1">
    <location>
        <begin position="144"/>
        <end position="171"/>
    </location>
</feature>
<feature type="disulfide bond" evidence="1">
    <location>
        <begin position="228"/>
        <end position="238"/>
    </location>
</feature>
<feature type="disulfide bond" evidence="1">
    <location>
        <begin position="272"/>
        <end position="281"/>
    </location>
</feature>
<feature type="splice variant" id="VSP_044799" description="In isoform 2." evidence="11">
    <location>
        <begin position="30"/>
        <end position="55"/>
    </location>
</feature>
<feature type="sequence variant" id="VAR_057664" description="In dbSNP:rs2006846.">
    <original>V</original>
    <variation>G</variation>
    <location>
        <position position="38"/>
    </location>
</feature>
<feature type="sequence variant" id="VAR_020338" description="In dbSNP:rs2277838." evidence="8">
    <original>R</original>
    <variation>H</variation>
    <location>
        <position position="242"/>
    </location>
</feature>
<feature type="sequence conflict" description="In Ref. 5; AAF13303." evidence="14" ref="5">
    <original>L</original>
    <variation>F</variation>
    <location>
        <position position="393"/>
    </location>
</feature>
<keyword id="KW-0025">Alternative splicing</keyword>
<keyword id="KW-1003">Cell membrane</keyword>
<keyword id="KW-1015">Disulfide bond</keyword>
<keyword id="KW-0256">Endoplasmic reticulum</keyword>
<keyword id="KW-0325">Glycoprotein</keyword>
<keyword id="KW-0407">Ion channel</keyword>
<keyword id="KW-0406">Ion transport</keyword>
<keyword id="KW-1071">Ligand-gated ion channel</keyword>
<keyword id="KW-0472">Membrane</keyword>
<keyword id="KW-0539">Nucleus</keyword>
<keyword id="KW-0597">Phosphoprotein</keyword>
<keyword id="KW-0675">Receptor</keyword>
<keyword id="KW-1185">Reference proteome</keyword>
<keyword id="KW-0812">Transmembrane</keyword>
<keyword id="KW-1133">Transmembrane helix</keyword>
<keyword id="KW-0813">Transport</keyword>
<gene>
    <name type="primary">P2RX6</name>
    <name type="synonym">P2RXL1</name>
    <name type="synonym">P2X6</name>
</gene>
<dbReference type="EMBL" id="AB002059">
    <property type="protein sequence ID" value="BAA22047.1"/>
    <property type="status" value="ALT_INIT"/>
    <property type="molecule type" value="Genomic_DNA"/>
</dbReference>
<dbReference type="EMBL" id="AB002058">
    <property type="protein sequence ID" value="BAA22046.1"/>
    <property type="status" value="ALT_INIT"/>
    <property type="molecule type" value="mRNA"/>
</dbReference>
<dbReference type="EMBL" id="CR456535">
    <property type="protein sequence ID" value="CAG30421.1"/>
    <property type="molecule type" value="mRNA"/>
</dbReference>
<dbReference type="EMBL" id="AC002472">
    <property type="status" value="NOT_ANNOTATED_CDS"/>
    <property type="molecule type" value="Genomic_DNA"/>
</dbReference>
<dbReference type="EMBL" id="BC033488">
    <property type="protein sequence ID" value="AAH33488.1"/>
    <property type="status" value="ALT_INIT"/>
    <property type="molecule type" value="mRNA"/>
</dbReference>
<dbReference type="EMBL" id="BC109209">
    <property type="protein sequence ID" value="AAI09210.1"/>
    <property type="status" value="ALT_INIT"/>
    <property type="molecule type" value="mRNA"/>
</dbReference>
<dbReference type="EMBL" id="AF065385">
    <property type="protein sequence ID" value="AAF13303.1"/>
    <property type="status" value="ALT_SEQ"/>
    <property type="molecule type" value="mRNA"/>
</dbReference>
<dbReference type="CCDS" id="CCDS13788.2">
    <molecule id="O15547-1"/>
</dbReference>
<dbReference type="CCDS" id="CCDS54504.1">
    <molecule id="O15547-2"/>
</dbReference>
<dbReference type="RefSeq" id="NP_001153026.1">
    <molecule id="O15547-2"/>
    <property type="nucleotide sequence ID" value="NM_001159554.2"/>
</dbReference>
<dbReference type="RefSeq" id="NP_005437.2">
    <molecule id="O15547-1"/>
    <property type="nucleotide sequence ID" value="NM_005446.5"/>
</dbReference>
<dbReference type="SMR" id="O15547"/>
<dbReference type="BioGRID" id="114575">
    <property type="interactions" value="64"/>
</dbReference>
<dbReference type="FunCoup" id="O15547">
    <property type="interactions" value="549"/>
</dbReference>
<dbReference type="IntAct" id="O15547">
    <property type="interactions" value="55"/>
</dbReference>
<dbReference type="STRING" id="9606.ENSP00000416193"/>
<dbReference type="BindingDB" id="O15547"/>
<dbReference type="ChEMBL" id="CHEMBL2670"/>
<dbReference type="DrugBank" id="DB01069">
    <property type="generic name" value="Promethazine"/>
</dbReference>
<dbReference type="GlyCosmos" id="O15547">
    <property type="glycosylation" value="3 sites, No reported glycans"/>
</dbReference>
<dbReference type="GlyGen" id="O15547">
    <property type="glycosylation" value="4 sites, 1 N-linked glycan (1 site), 1 O-linked glycan (1 site)"/>
</dbReference>
<dbReference type="iPTMnet" id="O15547"/>
<dbReference type="PhosphoSitePlus" id="O15547"/>
<dbReference type="BioMuta" id="P2RX6"/>
<dbReference type="jPOST" id="O15547"/>
<dbReference type="MassIVE" id="O15547"/>
<dbReference type="PaxDb" id="9606-ENSP00000416193"/>
<dbReference type="PeptideAtlas" id="O15547"/>
<dbReference type="Antibodypedia" id="8429">
    <property type="antibodies" value="153 antibodies from 24 providers"/>
</dbReference>
<dbReference type="DNASU" id="9127"/>
<dbReference type="Ensembl" id="ENST00000401443.5">
    <molecule id="O15547-2"/>
    <property type="protein sequence ID" value="ENSP00000385309.1"/>
    <property type="gene ID" value="ENSG00000099957.17"/>
</dbReference>
<dbReference type="Ensembl" id="ENST00000413302.7">
    <molecule id="O15547-1"/>
    <property type="protein sequence ID" value="ENSP00000416193.2"/>
    <property type="gene ID" value="ENSG00000099957.17"/>
</dbReference>
<dbReference type="GeneID" id="9127"/>
<dbReference type="KEGG" id="hsa:9127"/>
<dbReference type="MANE-Select" id="ENST00000413302.7">
    <property type="protein sequence ID" value="ENSP00000416193.2"/>
    <property type="RefSeq nucleotide sequence ID" value="NM_005446.5"/>
    <property type="RefSeq protein sequence ID" value="NP_005437.2"/>
</dbReference>
<dbReference type="UCSC" id="uc002ztz.3">
    <molecule id="O15547-1"/>
    <property type="organism name" value="human"/>
</dbReference>
<dbReference type="AGR" id="HGNC:8538"/>
<dbReference type="CTD" id="9127"/>
<dbReference type="DisGeNET" id="9127"/>
<dbReference type="GeneCards" id="P2RX6"/>
<dbReference type="HGNC" id="HGNC:8538">
    <property type="gene designation" value="P2RX6"/>
</dbReference>
<dbReference type="HPA" id="ENSG00000099957">
    <property type="expression patterns" value="Group enriched (skeletal muscle, tongue)"/>
</dbReference>
<dbReference type="MIM" id="608077">
    <property type="type" value="gene"/>
</dbReference>
<dbReference type="neXtProt" id="NX_O15547"/>
<dbReference type="OpenTargets" id="ENSG00000099957"/>
<dbReference type="PharmGKB" id="PA162398523"/>
<dbReference type="VEuPathDB" id="HostDB:ENSG00000099957"/>
<dbReference type="eggNOG" id="ENOG502R480">
    <property type="taxonomic scope" value="Eukaryota"/>
</dbReference>
<dbReference type="GeneTree" id="ENSGT01020000230351"/>
<dbReference type="HOGENOM" id="CLU_034469_1_0_1"/>
<dbReference type="InParanoid" id="O15547"/>
<dbReference type="OMA" id="ATMVCDL"/>
<dbReference type="OrthoDB" id="494673at2759"/>
<dbReference type="PAN-GO" id="O15547">
    <property type="GO annotations" value="2 GO annotations based on evolutionary models"/>
</dbReference>
<dbReference type="PhylomeDB" id="O15547"/>
<dbReference type="TreeFam" id="TF328633"/>
<dbReference type="PathwayCommons" id="O15547"/>
<dbReference type="Reactome" id="R-HSA-139853">
    <property type="pathway name" value="Elevation of cytosolic Ca2+ levels"/>
</dbReference>
<dbReference type="Reactome" id="R-HSA-418346">
    <property type="pathway name" value="Platelet homeostasis"/>
</dbReference>
<dbReference type="SignaLink" id="O15547"/>
<dbReference type="BioGRID-ORCS" id="9127">
    <property type="hits" value="21 hits in 1146 CRISPR screens"/>
</dbReference>
<dbReference type="GeneWiki" id="P2RX6"/>
<dbReference type="GenomeRNAi" id="9127"/>
<dbReference type="Pharos" id="O15547">
    <property type="development level" value="Tchem"/>
</dbReference>
<dbReference type="PRO" id="PR:O15547"/>
<dbReference type="Proteomes" id="UP000005640">
    <property type="component" value="Chromosome 22"/>
</dbReference>
<dbReference type="RNAct" id="O15547">
    <property type="molecule type" value="protein"/>
</dbReference>
<dbReference type="Bgee" id="ENSG00000099957">
    <property type="expression patterns" value="Expressed in gastrocnemius and 92 other cell types or tissues"/>
</dbReference>
<dbReference type="ExpressionAtlas" id="O15547">
    <property type="expression patterns" value="baseline and differential"/>
</dbReference>
<dbReference type="GO" id="GO:0030054">
    <property type="term" value="C:cell junction"/>
    <property type="evidence" value="ECO:0000314"/>
    <property type="project" value="BHF-UCL"/>
</dbReference>
<dbReference type="GO" id="GO:0005737">
    <property type="term" value="C:cytoplasm"/>
    <property type="evidence" value="ECO:0000314"/>
    <property type="project" value="BHF-UCL"/>
</dbReference>
<dbReference type="GO" id="GO:0043197">
    <property type="term" value="C:dendritic spine"/>
    <property type="evidence" value="ECO:0007669"/>
    <property type="project" value="Ensembl"/>
</dbReference>
<dbReference type="GO" id="GO:0005789">
    <property type="term" value="C:endoplasmic reticulum membrane"/>
    <property type="evidence" value="ECO:0007669"/>
    <property type="project" value="Ensembl"/>
</dbReference>
<dbReference type="GO" id="GO:0098978">
    <property type="term" value="C:glutamatergic synapse"/>
    <property type="evidence" value="ECO:0007669"/>
    <property type="project" value="Ensembl"/>
</dbReference>
<dbReference type="GO" id="GO:0043025">
    <property type="term" value="C:neuronal cell body"/>
    <property type="evidence" value="ECO:0007669"/>
    <property type="project" value="Ensembl"/>
</dbReference>
<dbReference type="GO" id="GO:0005637">
    <property type="term" value="C:nuclear inner membrane"/>
    <property type="evidence" value="ECO:0007669"/>
    <property type="project" value="UniProtKB-SubCell"/>
</dbReference>
<dbReference type="GO" id="GO:0098688">
    <property type="term" value="C:parallel fiber to Purkinje cell synapse"/>
    <property type="evidence" value="ECO:0007669"/>
    <property type="project" value="Ensembl"/>
</dbReference>
<dbReference type="GO" id="GO:0005886">
    <property type="term" value="C:plasma membrane"/>
    <property type="evidence" value="ECO:0000318"/>
    <property type="project" value="GO_Central"/>
</dbReference>
<dbReference type="GO" id="GO:0099634">
    <property type="term" value="C:postsynaptic specialization membrane"/>
    <property type="evidence" value="ECO:0007669"/>
    <property type="project" value="Ensembl"/>
</dbReference>
<dbReference type="GO" id="GO:0043235">
    <property type="term" value="C:receptor complex"/>
    <property type="evidence" value="ECO:0000314"/>
    <property type="project" value="ARUK-UCL"/>
</dbReference>
<dbReference type="GO" id="GO:0005524">
    <property type="term" value="F:ATP binding"/>
    <property type="evidence" value="ECO:0000303"/>
    <property type="project" value="BHF-UCL"/>
</dbReference>
<dbReference type="GO" id="GO:0015267">
    <property type="term" value="F:channel activity"/>
    <property type="evidence" value="ECO:0000304"/>
    <property type="project" value="ProtInc"/>
</dbReference>
<dbReference type="GO" id="GO:0004931">
    <property type="term" value="F:extracellularly ATP-gated monoatomic cation channel activity"/>
    <property type="evidence" value="ECO:0000318"/>
    <property type="project" value="GO_Central"/>
</dbReference>
<dbReference type="GO" id="GO:0044877">
    <property type="term" value="F:protein-containing complex binding"/>
    <property type="evidence" value="ECO:0007669"/>
    <property type="project" value="Ensembl"/>
</dbReference>
<dbReference type="GO" id="GO:0001614">
    <property type="term" value="F:purinergic nucleotide receptor activity"/>
    <property type="evidence" value="ECO:0000303"/>
    <property type="project" value="BHF-UCL"/>
</dbReference>
<dbReference type="GO" id="GO:0004888">
    <property type="term" value="F:transmembrane signaling receptor activity"/>
    <property type="evidence" value="ECO:0000304"/>
    <property type="project" value="ProtInc"/>
</dbReference>
<dbReference type="GO" id="GO:0070588">
    <property type="term" value="P:calcium ion transmembrane transport"/>
    <property type="evidence" value="ECO:0000318"/>
    <property type="project" value="GO_Central"/>
</dbReference>
<dbReference type="GO" id="GO:0006936">
    <property type="term" value="P:muscle contraction"/>
    <property type="evidence" value="ECO:0000304"/>
    <property type="project" value="ProtInc"/>
</dbReference>
<dbReference type="GO" id="GO:0033198">
    <property type="term" value="P:response to ATP"/>
    <property type="evidence" value="ECO:0007669"/>
    <property type="project" value="InterPro"/>
</dbReference>
<dbReference type="GO" id="GO:0007165">
    <property type="term" value="P:signal transduction"/>
    <property type="evidence" value="ECO:0000304"/>
    <property type="project" value="ProtInc"/>
</dbReference>
<dbReference type="FunFam" id="2.60.490.10:FF:000001">
    <property type="entry name" value="P2X purinoceptor"/>
    <property type="match status" value="1"/>
</dbReference>
<dbReference type="Gene3D" id="1.10.287.940">
    <property type="entry name" value="atp-gated p2x4 ion channel"/>
    <property type="match status" value="1"/>
</dbReference>
<dbReference type="Gene3D" id="2.60.490.10">
    <property type="entry name" value="atp-gated p2x4 ion channel domain"/>
    <property type="match status" value="1"/>
</dbReference>
<dbReference type="InterPro" id="IPR003049">
    <property type="entry name" value="P2X6_purnocptor"/>
</dbReference>
<dbReference type="InterPro" id="IPR027309">
    <property type="entry name" value="P2X_extracellular_dom_sf"/>
</dbReference>
<dbReference type="InterPro" id="IPR001429">
    <property type="entry name" value="P2X_purnocptor"/>
</dbReference>
<dbReference type="InterPro" id="IPR053792">
    <property type="entry name" value="P2X_RECEPTOR_CS"/>
</dbReference>
<dbReference type="NCBIfam" id="TIGR00863">
    <property type="entry name" value="P2X"/>
    <property type="match status" value="1"/>
</dbReference>
<dbReference type="PANTHER" id="PTHR10125">
    <property type="entry name" value="P2X PURINOCEPTOR"/>
    <property type="match status" value="1"/>
</dbReference>
<dbReference type="PANTHER" id="PTHR10125:SF21">
    <property type="entry name" value="P2X PURINOCEPTOR 6"/>
    <property type="match status" value="1"/>
</dbReference>
<dbReference type="Pfam" id="PF00864">
    <property type="entry name" value="P2X_receptor"/>
    <property type="match status" value="1"/>
</dbReference>
<dbReference type="PIRSF" id="PIRSF005713">
    <property type="entry name" value="P2X_purinoceptor"/>
    <property type="match status" value="1"/>
</dbReference>
<dbReference type="PRINTS" id="PR01313">
    <property type="entry name" value="P2X6RECEPTOR"/>
</dbReference>
<dbReference type="PRINTS" id="PR01307">
    <property type="entry name" value="P2XRECEPTOR"/>
</dbReference>
<dbReference type="PROSITE" id="PS01212">
    <property type="entry name" value="P2X_RECEPTOR"/>
    <property type="match status" value="1"/>
</dbReference>